<accession>A0A589</accession>
<feature type="signal peptide" evidence="1">
    <location>
        <begin position="1"/>
        <end position="21"/>
    </location>
</feature>
<feature type="chain" id="PRO_5010819791" description="T cell receptor beta variable 4-3" evidence="1">
    <location>
        <begin position="22"/>
        <end position="114"/>
    </location>
</feature>
<feature type="domain" description="Ig-like" evidence="2">
    <location>
        <begin position="22"/>
        <end position="114" status="greater than"/>
    </location>
</feature>
<feature type="glycosylation site" description="N-linked (GlcNAc...) asparagine" evidence="1">
    <location>
        <position position="76"/>
    </location>
</feature>
<feature type="glycosylation site" description="N-linked (GlcNAc...) asparagine" evidence="1">
    <location>
        <position position="89"/>
    </location>
</feature>
<feature type="disulfide bond" evidence="2">
    <location>
        <begin position="42"/>
        <end position="110"/>
    </location>
</feature>
<feature type="non-terminal residue">
    <location>
        <position position="114"/>
    </location>
</feature>
<reference key="1">
    <citation type="journal article" date="1996" name="Science">
        <title>The complete 685-kilobase DNA sequence of the human beta T cell receptor locus.</title>
        <authorList>
            <person name="Rowen L."/>
            <person name="Koop B.F."/>
            <person name="Hood L."/>
        </authorList>
    </citation>
    <scope>NUCLEOTIDE SEQUENCE [GENOMIC DNA] (IMGT ALLELE TRBV4-3*01)</scope>
</reference>
<reference key="2">
    <citation type="journal article" date="2003" name="Nature">
        <title>The DNA sequence of human chromosome 7.</title>
        <authorList>
            <person name="Hillier L.W."/>
            <person name="Fulton R.S."/>
            <person name="Fulton L.A."/>
            <person name="Graves T.A."/>
            <person name="Pepin K.H."/>
            <person name="Wagner-McPherson C."/>
            <person name="Layman D."/>
            <person name="Maas J."/>
            <person name="Jaeger S."/>
            <person name="Walker R."/>
            <person name="Wylie K."/>
            <person name="Sekhon M."/>
            <person name="Becker M.C."/>
            <person name="O'Laughlin M.D."/>
            <person name="Schaller M.E."/>
            <person name="Fewell G.A."/>
            <person name="Delehaunty K.D."/>
            <person name="Miner T.L."/>
            <person name="Nash W.E."/>
            <person name="Cordes M."/>
            <person name="Du H."/>
            <person name="Sun H."/>
            <person name="Edwards J."/>
            <person name="Bradshaw-Cordum H."/>
            <person name="Ali J."/>
            <person name="Andrews S."/>
            <person name="Isak A."/>
            <person name="Vanbrunt A."/>
            <person name="Nguyen C."/>
            <person name="Du F."/>
            <person name="Lamar B."/>
            <person name="Courtney L."/>
            <person name="Kalicki J."/>
            <person name="Ozersky P."/>
            <person name="Bielicki L."/>
            <person name="Scott K."/>
            <person name="Holmes A."/>
            <person name="Harkins R."/>
            <person name="Harris A."/>
            <person name="Strong C.M."/>
            <person name="Hou S."/>
            <person name="Tomlinson C."/>
            <person name="Dauphin-Kohlberg S."/>
            <person name="Kozlowicz-Reilly A."/>
            <person name="Leonard S."/>
            <person name="Rohlfing T."/>
            <person name="Rock S.M."/>
            <person name="Tin-Wollam A.-M."/>
            <person name="Abbott A."/>
            <person name="Minx P."/>
            <person name="Maupin R."/>
            <person name="Strowmatt C."/>
            <person name="Latreille P."/>
            <person name="Miller N."/>
            <person name="Johnson D."/>
            <person name="Murray J."/>
            <person name="Woessner J.P."/>
            <person name="Wendl M.C."/>
            <person name="Yang S.-P."/>
            <person name="Schultz B.R."/>
            <person name="Wallis J.W."/>
            <person name="Spieth J."/>
            <person name="Bieri T.A."/>
            <person name="Nelson J.O."/>
            <person name="Berkowicz N."/>
            <person name="Wohldmann P.E."/>
            <person name="Cook L.L."/>
            <person name="Hickenbotham M.T."/>
            <person name="Eldred J."/>
            <person name="Williams D."/>
            <person name="Bedell J.A."/>
            <person name="Mardis E.R."/>
            <person name="Clifton S.W."/>
            <person name="Chissoe S.L."/>
            <person name="Marra M.A."/>
            <person name="Raymond C."/>
            <person name="Haugen E."/>
            <person name="Gillett W."/>
            <person name="Zhou Y."/>
            <person name="James R."/>
            <person name="Phelps K."/>
            <person name="Iadanoto S."/>
            <person name="Bubb K."/>
            <person name="Simms E."/>
            <person name="Levy R."/>
            <person name="Clendenning J."/>
            <person name="Kaul R."/>
            <person name="Kent W.J."/>
            <person name="Furey T.S."/>
            <person name="Baertsch R.A."/>
            <person name="Brent M.R."/>
            <person name="Keibler E."/>
            <person name="Flicek P."/>
            <person name="Bork P."/>
            <person name="Suyama M."/>
            <person name="Bailey J.A."/>
            <person name="Portnoy M.E."/>
            <person name="Torrents D."/>
            <person name="Chinwalla A.T."/>
            <person name="Gish W.R."/>
            <person name="Eddy S.R."/>
            <person name="McPherson J.D."/>
            <person name="Olson M.V."/>
            <person name="Eichler E.E."/>
            <person name="Green E.D."/>
            <person name="Waterston R.H."/>
            <person name="Wilson R.K."/>
        </authorList>
    </citation>
    <scope>NUCLEOTIDE SEQUENCE [LARGE SCALE GENOMIC DNA] (IMGT ALLELE TRBV4-3*01)</scope>
</reference>
<reference key="3">
    <citation type="book" date="2001" name="The T Cell Receptor FactsBook.">
        <title>The T Cell Receptor FactsBook.</title>
        <editorList>
            <person name="Lefranc M.P."/>
            <person name="Lefranc G."/>
        </editorList>
        <authorList>
            <person name="Lefranc M.P."/>
            <person name="Lefranc G."/>
        </authorList>
    </citation>
    <scope>NOMENCLATURE</scope>
</reference>
<reference key="4">
    <citation type="journal article" date="2004" name="Nat. Rev. Immunol.">
        <title>The many important facets of T-cell repertoire diversity.</title>
        <authorList>
            <person name="Nikolich-Zugich J."/>
            <person name="Slifka M.K."/>
            <person name="Messaoudi I."/>
        </authorList>
    </citation>
    <scope>REVIEW ON T CELL REPERTOIRE DIVERSITY</scope>
</reference>
<reference key="5">
    <citation type="journal article" date="2010" name="Cold Spring Harb. Perspect. Biol.">
        <title>Structural biology of the T-cell receptor: insights into receptor assembly, ligand recognition, and initiation of signaling.</title>
        <authorList>
            <person name="Wucherpfennig K.W."/>
            <person name="Gagnon E."/>
            <person name="Call M.J."/>
            <person name="Huseby E.S."/>
            <person name="Call M.E."/>
        </authorList>
    </citation>
    <scope>REVIEW ON T CELL RECEPTOR-CD3 COMPLEX ASSEMBLY</scope>
    <scope>SUBCELLULAR LOCATION</scope>
</reference>
<reference key="6">
    <citation type="journal article" date="2013" name="Nat. Rev. Immunol.">
        <title>T cell receptor signalling networks: branched, diversified and bounded.</title>
        <authorList>
            <person name="Brownlie R.J."/>
            <person name="Zamoyska R."/>
        </authorList>
    </citation>
    <scope>REVIEW ON T CELL RECEPTOR SIGNALING</scope>
</reference>
<reference key="7">
    <citation type="journal article" date="2014" name="Front. Immunol.">
        <title>Immunoglobulin and T Cell Receptor Genes: IMGT((R)) and the Birth and Rise of Immunoinformatics.</title>
        <authorList>
            <person name="Lefranc M.P."/>
        </authorList>
    </citation>
    <scope>NOMENCLATURE</scope>
</reference>
<reference key="8">
    <citation type="journal article" date="2015" name="Annu. Rev. Immunol.">
        <title>T cell antigen receptor recognition of antigen-presenting molecules.</title>
        <authorList>
            <person name="Rossjohn J."/>
            <person name="Gras S."/>
            <person name="Miles J.J."/>
            <person name="Turner S.J."/>
            <person name="Godfrey D.I."/>
            <person name="McCluskey J."/>
        </authorList>
    </citation>
    <scope>REVIEW ON FUNCTION</scope>
</reference>
<dbReference type="EMBL" id="L36092">
    <property type="protein sequence ID" value="AAC80203.1"/>
    <property type="molecule type" value="Genomic_DNA"/>
</dbReference>
<dbReference type="EMBL" id="AC234635">
    <property type="status" value="NOT_ANNOTATED_CDS"/>
    <property type="molecule type" value="Genomic_DNA"/>
</dbReference>
<dbReference type="SMR" id="A0A589"/>
<dbReference type="FunCoup" id="A0A589">
    <property type="interactions" value="804"/>
</dbReference>
<dbReference type="IMGT_GENE-DB" id="TRBV4-3"/>
<dbReference type="GlyCosmos" id="A0A589">
    <property type="glycosylation" value="2 sites, No reported glycans"/>
</dbReference>
<dbReference type="GlyGen" id="A0A589">
    <property type="glycosylation" value="2 sites"/>
</dbReference>
<dbReference type="BioMuta" id="ENSG00000282543"/>
<dbReference type="MassIVE" id="A0A589"/>
<dbReference type="AGR" id="HGNC:12217"/>
<dbReference type="GeneCards" id="TRBV4-3"/>
<dbReference type="HGNC" id="HGNC:12217">
    <property type="gene designation" value="TRBV4-3"/>
</dbReference>
<dbReference type="neXtProt" id="NX_A0A589"/>
<dbReference type="InParanoid" id="A0A589"/>
<dbReference type="PAN-GO" id="A0A589">
    <property type="GO annotations" value="2 GO annotations based on evolutionary models"/>
</dbReference>
<dbReference type="PhylomeDB" id="A0A589"/>
<dbReference type="ChiTaRS" id="TRBV4-3">
    <property type="organism name" value="human"/>
</dbReference>
<dbReference type="Pharos" id="A0A589">
    <property type="development level" value="Tdark"/>
</dbReference>
<dbReference type="PRO" id="PR:A0A589"/>
<dbReference type="Proteomes" id="UP000005640">
    <property type="component" value="Unplaced"/>
</dbReference>
<dbReference type="RNAct" id="A0A589">
    <property type="molecule type" value="protein"/>
</dbReference>
<dbReference type="GO" id="GO:0005886">
    <property type="term" value="C:plasma membrane"/>
    <property type="evidence" value="ECO:0000318"/>
    <property type="project" value="GO_Central"/>
</dbReference>
<dbReference type="GO" id="GO:0042101">
    <property type="term" value="C:T cell receptor complex"/>
    <property type="evidence" value="ECO:0007669"/>
    <property type="project" value="UniProtKB-KW"/>
</dbReference>
<dbReference type="GO" id="GO:0002250">
    <property type="term" value="P:adaptive immune response"/>
    <property type="evidence" value="ECO:0007669"/>
    <property type="project" value="UniProtKB-KW"/>
</dbReference>
<dbReference type="GO" id="GO:0007166">
    <property type="term" value="P:cell surface receptor signaling pathway"/>
    <property type="evidence" value="ECO:0000318"/>
    <property type="project" value="GO_Central"/>
</dbReference>
<dbReference type="Gene3D" id="2.60.40.10">
    <property type="entry name" value="Immunoglobulins"/>
    <property type="match status" value="1"/>
</dbReference>
<dbReference type="InterPro" id="IPR007110">
    <property type="entry name" value="Ig-like_dom"/>
</dbReference>
<dbReference type="InterPro" id="IPR036179">
    <property type="entry name" value="Ig-like_dom_sf"/>
</dbReference>
<dbReference type="InterPro" id="IPR013783">
    <property type="entry name" value="Ig-like_fold"/>
</dbReference>
<dbReference type="InterPro" id="IPR013106">
    <property type="entry name" value="Ig_V-set"/>
</dbReference>
<dbReference type="InterPro" id="IPR050413">
    <property type="entry name" value="TCR_beta_variable"/>
</dbReference>
<dbReference type="PANTHER" id="PTHR23268:SF98">
    <property type="entry name" value="T CELL RECEPTOR BETA VARIABLE 4-3"/>
    <property type="match status" value="1"/>
</dbReference>
<dbReference type="PANTHER" id="PTHR23268">
    <property type="entry name" value="T-CELL RECEPTOR BETA CHAIN"/>
    <property type="match status" value="1"/>
</dbReference>
<dbReference type="Pfam" id="PF07686">
    <property type="entry name" value="V-set"/>
    <property type="match status" value="1"/>
</dbReference>
<dbReference type="SMART" id="SM00406">
    <property type="entry name" value="IGv"/>
    <property type="match status" value="1"/>
</dbReference>
<dbReference type="SUPFAM" id="SSF48726">
    <property type="entry name" value="Immunoglobulin"/>
    <property type="match status" value="1"/>
</dbReference>
<dbReference type="PROSITE" id="PS50835">
    <property type="entry name" value="IG_LIKE"/>
    <property type="match status" value="1"/>
</dbReference>
<gene>
    <name evidence="9" type="primary">TRBV4-3</name>
    <name evidence="8" type="synonym">TCRBV7S2A1N4T</name>
</gene>
<protein>
    <recommendedName>
        <fullName evidence="9">T cell receptor beta variable 4-3</fullName>
    </recommendedName>
</protein>
<keyword id="KW-1064">Adaptive immunity</keyword>
<keyword id="KW-1003">Cell membrane</keyword>
<keyword id="KW-1015">Disulfide bond</keyword>
<keyword id="KW-0325">Glycoprotein</keyword>
<keyword id="KW-0391">Immunity</keyword>
<keyword id="KW-0393">Immunoglobulin domain</keyword>
<keyword id="KW-0472">Membrane</keyword>
<keyword id="KW-1267">Proteomics identification</keyword>
<keyword id="KW-0675">Receptor</keyword>
<keyword id="KW-1185">Reference proteome</keyword>
<keyword id="KW-0732">Signal</keyword>
<keyword id="KW-1279">T cell receptor</keyword>
<name>TVB43_HUMAN</name>
<proteinExistence type="evidence at protein level"/>
<evidence type="ECO:0000255" key="1"/>
<evidence type="ECO:0000255" key="2">
    <source>
        <dbReference type="PROSITE-ProRule" id="PRU00114"/>
    </source>
</evidence>
<evidence type="ECO:0000303" key="3">
    <source>
    </source>
</evidence>
<evidence type="ECO:0000303" key="4">
    <source>
    </source>
</evidence>
<evidence type="ECO:0000303" key="5">
    <source>
    </source>
</evidence>
<evidence type="ECO:0000303" key="6">
    <source>
    </source>
</evidence>
<evidence type="ECO:0000303" key="7">
    <source>
    </source>
</evidence>
<evidence type="ECO:0000303" key="8">
    <source>
    </source>
</evidence>
<evidence type="ECO:0000303" key="9">
    <source ref="3"/>
</evidence>
<evidence type="ECO:0000305" key="10"/>
<evidence type="ECO:0000312" key="11">
    <source>
        <dbReference type="EMBL" id="AAC80203.1"/>
    </source>
</evidence>
<comment type="function">
    <text evidence="3 5 6 7">V region of the variable domain of T cell receptor (TR) beta chain that participates in the antigen recognition (PubMed:24600447). Alpha-beta T cell receptors are antigen specific receptors which are essential to the immune response and are present on the cell surface of T lymphocytes. Recognize peptide-major histocompatibility (MH) (pMH) complexes that are displayed by antigen presenting cells (APC), a prerequisite for efficient T cell adaptive immunity against pathogens (PubMed:25493333). Binding of alpha-beta TR to pMH complex initiates TR-CD3 clustering on the cell surface and intracellular activation of LCK that phosphorylates the ITAM motifs of CD3G, CD3D, CD3E and CD247 enabling the recruitment of ZAP70. In turn ZAP70 phosphorylates LAT, which recruits numerous signaling molecules to form the LAT signalosome. The LAT signalosome propagates signal branching to three major signaling pathways, the calcium, the mitogen-activated protein kinase (MAPK) kinase and the nuclear factor NF-kappa-B (NF-kB) pathways, leading to the mobilization of transcription factors that are critical for gene expression and essential for T cell growth and differentiation (PubMed:23524462). The T cell repertoire is generated in the thymus, by V-(D)-J rearrangement. This repertoire is then shaped by intrathymic selection events to generate a peripheral T cell pool of self-MH restricted, non-autoaggressive T cells. Post-thymic interaction of alpha-beta TR with the pMH complexes shapes TR structural and functional avidity (PubMed:15040585).</text>
</comment>
<comment type="subunit">
    <text evidence="4">Alpha-beta TR is a heterodimer composed of an alpha and beta chain; disulfide-linked. The alpha-beta TR is associated with the transmembrane signaling CD3 coreceptor proteins to form the TR-CD3 (TcR or TCR). The assembly of alpha-beta TR heterodimers with CD3 occurs in the endoplasmic reticulum where a single alpha-beta TR heterodimer associates with one CD3D-CD3E heterodimer, one CD3G-CD3E heterodimer and one CD247 homodimer forming a stable octameric structure. CD3D-CD3E and CD3G-CD3E heterodimers preferentially associate with TR alpha and TR beta chains, respectively. The association of the CD247 homodimer is the last step of TcR assembly in the endoplasmic reticulum and is required for transport to the cell surface.</text>
</comment>
<comment type="subcellular location">
    <subcellularLocation>
        <location evidence="4">Cell membrane</location>
    </subcellularLocation>
</comment>
<comment type="polymorphism">
    <text evidence="10">There are several alleles. The sequence shown is that of IMGT allele TRBV4-3*01.</text>
</comment>
<sequence>MGCRLLCCAVLCLLGAVPMETGVTQTPRHLVMGMTNKKSLKCEQHLGHNAMYWYKQSAKKPLELMFVYSLEERVENNSVPSRFSPECPNSSHLFLHLHTLQPEDSALYLCASSQ</sequence>
<organism evidence="11">
    <name type="scientific">Homo sapiens</name>
    <name type="common">Human</name>
    <dbReference type="NCBI Taxonomy" id="9606"/>
    <lineage>
        <taxon>Eukaryota</taxon>
        <taxon>Metazoa</taxon>
        <taxon>Chordata</taxon>
        <taxon>Craniata</taxon>
        <taxon>Vertebrata</taxon>
        <taxon>Euteleostomi</taxon>
        <taxon>Mammalia</taxon>
        <taxon>Eutheria</taxon>
        <taxon>Euarchontoglires</taxon>
        <taxon>Primates</taxon>
        <taxon>Haplorrhini</taxon>
        <taxon>Catarrhini</taxon>
        <taxon>Hominidae</taxon>
        <taxon>Homo</taxon>
    </lineage>
</organism>